<evidence type="ECO:0000255" key="1">
    <source>
        <dbReference type="HAMAP-Rule" id="MF_00096"/>
    </source>
</evidence>
<gene>
    <name evidence="1" type="primary">mutS</name>
    <name type="ordered locus">SPP_2131</name>
</gene>
<reference key="1">
    <citation type="journal article" date="2010" name="Genome Biol.">
        <title>Structure and dynamics of the pan-genome of Streptococcus pneumoniae and closely related species.</title>
        <authorList>
            <person name="Donati C."/>
            <person name="Hiller N.L."/>
            <person name="Tettelin H."/>
            <person name="Muzzi A."/>
            <person name="Croucher N.J."/>
            <person name="Angiuoli S.V."/>
            <person name="Oggioni M."/>
            <person name="Dunning Hotopp J.C."/>
            <person name="Hu F.Z."/>
            <person name="Riley D.R."/>
            <person name="Covacci A."/>
            <person name="Mitchell T.J."/>
            <person name="Bentley S.D."/>
            <person name="Kilian M."/>
            <person name="Ehrlich G.D."/>
            <person name="Rappuoli R."/>
            <person name="Moxon E.R."/>
            <person name="Masignani V."/>
        </authorList>
    </citation>
    <scope>NUCLEOTIDE SEQUENCE [LARGE SCALE GENOMIC DNA]</scope>
    <source>
        <strain>P1031</strain>
    </source>
</reference>
<comment type="function">
    <text evidence="1">This protein is involved in the repair of mismatches in DNA. It is possible that it carries out the mismatch recognition step. This protein has a weak ATPase activity.</text>
</comment>
<comment type="similarity">
    <text evidence="1">Belongs to the DNA mismatch repair MutS family.</text>
</comment>
<protein>
    <recommendedName>
        <fullName evidence="1">DNA mismatch repair protein MutS</fullName>
    </recommendedName>
</protein>
<sequence length="844" mass="94848">MAIEKLSPGMQQYVDIKKQYPDAFLLFRMGDFYELFYEDAVNAAQILEISLTSRNKNADNPIPMAGVPYHSAQQYIDVLIEQGYKVAIAEQMEDPKQAVGVVKREVVQVITPGTVVDSSKPDSQNNFLVSIDREGNQFGLAYMDLVTGDFYVTGLLDFTLVCGEIRNLKAREVVLGYDLSEEEEQILSRQMNLVLSYEKESFEDLHLLDLRLATVEQTASSKLLQYVHRTQMRELNHLKPVIRYEIKDFLQMDYATKASLDLVENARSGKKQGSLFWLLDETKTAMGMRLLRSWIHRPLIDKERIVQRQEVVQVFLDHFFERSDLTDSLKGVYDIERLASRVSFGKTNPKDLLQLATTLSSVPRIRAILEGMEQPTLAYLIAQLDAIPELESLISAAIAPEAPHVITDGGIIRTGFDETLDKYRCVLREGTSWIAEIEAKERENSGISTLKIDYNKKDGYYFHVTNSQLGNVPAHFFRKATLKNSERFGTEELARIEGDMLEAREKSANLEYEIFMRIREEVGKYIQRLQALAQGIATVDVLQSLAVVAETQHLIRPEFGDDSQIDIRKGRHAVVEKVMGAQTYIPNTIQMAEDTSIQLVTGPNMSGKSTYMRQLAMTAVMAQLGSYVPAESAHLPIFDAIFTRIGAADDLVSGQSTFMVEMMEANNAISHATKNSLILFDELGRGTATYDGMALAQSIIEYIHEHIGAKTLFATHYHELTSLESSLQHLVNVHVATLEQDGQVTFLHKIEPGPADKSYGIHVAKIAGLPADLLARADKILTQLENQGTESPPPMRQTSAVTEQISLFDRAEEHPILAELAKLDVYNMTPMQVMNVLVELKQKL</sequence>
<keyword id="KW-0067">ATP-binding</keyword>
<keyword id="KW-0227">DNA damage</keyword>
<keyword id="KW-0234">DNA repair</keyword>
<keyword id="KW-0238">DNA-binding</keyword>
<keyword id="KW-0547">Nucleotide-binding</keyword>
<name>MUTS_STRZP</name>
<feature type="chain" id="PRO_1000192207" description="DNA mismatch repair protein MutS">
    <location>
        <begin position="1"/>
        <end position="844"/>
    </location>
</feature>
<feature type="binding site" evidence="1">
    <location>
        <begin position="602"/>
        <end position="609"/>
    </location>
    <ligand>
        <name>ATP</name>
        <dbReference type="ChEBI" id="CHEBI:30616"/>
    </ligand>
</feature>
<dbReference type="EMBL" id="CP000920">
    <property type="protein sequence ID" value="ACO20578.1"/>
    <property type="molecule type" value="Genomic_DNA"/>
</dbReference>
<dbReference type="RefSeq" id="WP_000963680.1">
    <property type="nucleotide sequence ID" value="NC_012467.1"/>
</dbReference>
<dbReference type="SMR" id="C1CN23"/>
<dbReference type="KEGG" id="spp:SPP_2131"/>
<dbReference type="HOGENOM" id="CLU_002472_3_1_9"/>
<dbReference type="GO" id="GO:0005829">
    <property type="term" value="C:cytosol"/>
    <property type="evidence" value="ECO:0007669"/>
    <property type="project" value="TreeGrafter"/>
</dbReference>
<dbReference type="GO" id="GO:0005524">
    <property type="term" value="F:ATP binding"/>
    <property type="evidence" value="ECO:0007669"/>
    <property type="project" value="UniProtKB-UniRule"/>
</dbReference>
<dbReference type="GO" id="GO:0140664">
    <property type="term" value="F:ATP-dependent DNA damage sensor activity"/>
    <property type="evidence" value="ECO:0007669"/>
    <property type="project" value="InterPro"/>
</dbReference>
<dbReference type="GO" id="GO:0003684">
    <property type="term" value="F:damaged DNA binding"/>
    <property type="evidence" value="ECO:0007669"/>
    <property type="project" value="UniProtKB-UniRule"/>
</dbReference>
<dbReference type="GO" id="GO:0030983">
    <property type="term" value="F:mismatched DNA binding"/>
    <property type="evidence" value="ECO:0007669"/>
    <property type="project" value="InterPro"/>
</dbReference>
<dbReference type="GO" id="GO:0006298">
    <property type="term" value="P:mismatch repair"/>
    <property type="evidence" value="ECO:0007669"/>
    <property type="project" value="UniProtKB-UniRule"/>
</dbReference>
<dbReference type="CDD" id="cd03284">
    <property type="entry name" value="ABC_MutS1"/>
    <property type="match status" value="1"/>
</dbReference>
<dbReference type="FunFam" id="1.10.1420.10:FF:000018">
    <property type="entry name" value="DNA mismatch repair protein MutS"/>
    <property type="match status" value="1"/>
</dbReference>
<dbReference type="FunFam" id="3.30.420.110:FF:000015">
    <property type="entry name" value="DNA mismatch repair protein MutS"/>
    <property type="match status" value="1"/>
</dbReference>
<dbReference type="FunFam" id="3.40.1170.10:FF:000001">
    <property type="entry name" value="DNA mismatch repair protein MutS"/>
    <property type="match status" value="1"/>
</dbReference>
<dbReference type="FunFam" id="3.40.50.300:FF:000896">
    <property type="entry name" value="DNA mismatch repair protein MutS"/>
    <property type="match status" value="1"/>
</dbReference>
<dbReference type="Gene3D" id="1.10.1420.10">
    <property type="match status" value="2"/>
</dbReference>
<dbReference type="Gene3D" id="3.40.1170.10">
    <property type="entry name" value="DNA repair protein MutS, domain I"/>
    <property type="match status" value="1"/>
</dbReference>
<dbReference type="Gene3D" id="3.30.420.110">
    <property type="entry name" value="MutS, connector domain"/>
    <property type="match status" value="1"/>
</dbReference>
<dbReference type="Gene3D" id="3.40.50.300">
    <property type="entry name" value="P-loop containing nucleotide triphosphate hydrolases"/>
    <property type="match status" value="1"/>
</dbReference>
<dbReference type="HAMAP" id="MF_00096">
    <property type="entry name" value="MutS"/>
    <property type="match status" value="1"/>
</dbReference>
<dbReference type="InterPro" id="IPR005748">
    <property type="entry name" value="DNA_mismatch_repair_MutS"/>
</dbReference>
<dbReference type="InterPro" id="IPR007695">
    <property type="entry name" value="DNA_mismatch_repair_MutS-lik_N"/>
</dbReference>
<dbReference type="InterPro" id="IPR017261">
    <property type="entry name" value="DNA_mismatch_repair_MutS/MSH"/>
</dbReference>
<dbReference type="InterPro" id="IPR000432">
    <property type="entry name" value="DNA_mismatch_repair_MutS_C"/>
</dbReference>
<dbReference type="InterPro" id="IPR007861">
    <property type="entry name" value="DNA_mismatch_repair_MutS_clamp"/>
</dbReference>
<dbReference type="InterPro" id="IPR007696">
    <property type="entry name" value="DNA_mismatch_repair_MutS_core"/>
</dbReference>
<dbReference type="InterPro" id="IPR016151">
    <property type="entry name" value="DNA_mismatch_repair_MutS_N"/>
</dbReference>
<dbReference type="InterPro" id="IPR036187">
    <property type="entry name" value="DNA_mismatch_repair_MutS_sf"/>
</dbReference>
<dbReference type="InterPro" id="IPR007860">
    <property type="entry name" value="DNA_mmatch_repair_MutS_con_dom"/>
</dbReference>
<dbReference type="InterPro" id="IPR045076">
    <property type="entry name" value="MutS"/>
</dbReference>
<dbReference type="InterPro" id="IPR036678">
    <property type="entry name" value="MutS_con_dom_sf"/>
</dbReference>
<dbReference type="InterPro" id="IPR027417">
    <property type="entry name" value="P-loop_NTPase"/>
</dbReference>
<dbReference type="NCBIfam" id="TIGR01070">
    <property type="entry name" value="mutS1"/>
    <property type="match status" value="1"/>
</dbReference>
<dbReference type="NCBIfam" id="NF003810">
    <property type="entry name" value="PRK05399.1"/>
    <property type="match status" value="1"/>
</dbReference>
<dbReference type="PANTHER" id="PTHR11361:SF34">
    <property type="entry name" value="DNA MISMATCH REPAIR PROTEIN MSH1, MITOCHONDRIAL"/>
    <property type="match status" value="1"/>
</dbReference>
<dbReference type="PANTHER" id="PTHR11361">
    <property type="entry name" value="DNA MISMATCH REPAIR PROTEIN MUTS FAMILY MEMBER"/>
    <property type="match status" value="1"/>
</dbReference>
<dbReference type="Pfam" id="PF01624">
    <property type="entry name" value="MutS_I"/>
    <property type="match status" value="1"/>
</dbReference>
<dbReference type="Pfam" id="PF05188">
    <property type="entry name" value="MutS_II"/>
    <property type="match status" value="1"/>
</dbReference>
<dbReference type="Pfam" id="PF05192">
    <property type="entry name" value="MutS_III"/>
    <property type="match status" value="1"/>
</dbReference>
<dbReference type="Pfam" id="PF05190">
    <property type="entry name" value="MutS_IV"/>
    <property type="match status" value="1"/>
</dbReference>
<dbReference type="Pfam" id="PF00488">
    <property type="entry name" value="MutS_V"/>
    <property type="match status" value="1"/>
</dbReference>
<dbReference type="PIRSF" id="PIRSF037677">
    <property type="entry name" value="DNA_mis_repair_Msh6"/>
    <property type="match status" value="1"/>
</dbReference>
<dbReference type="SMART" id="SM00534">
    <property type="entry name" value="MUTSac"/>
    <property type="match status" value="1"/>
</dbReference>
<dbReference type="SMART" id="SM00533">
    <property type="entry name" value="MUTSd"/>
    <property type="match status" value="1"/>
</dbReference>
<dbReference type="SUPFAM" id="SSF55271">
    <property type="entry name" value="DNA repair protein MutS, domain I"/>
    <property type="match status" value="1"/>
</dbReference>
<dbReference type="SUPFAM" id="SSF53150">
    <property type="entry name" value="DNA repair protein MutS, domain II"/>
    <property type="match status" value="1"/>
</dbReference>
<dbReference type="SUPFAM" id="SSF48334">
    <property type="entry name" value="DNA repair protein MutS, domain III"/>
    <property type="match status" value="1"/>
</dbReference>
<dbReference type="SUPFAM" id="SSF52540">
    <property type="entry name" value="P-loop containing nucleoside triphosphate hydrolases"/>
    <property type="match status" value="1"/>
</dbReference>
<dbReference type="PROSITE" id="PS00486">
    <property type="entry name" value="DNA_MISMATCH_REPAIR_2"/>
    <property type="match status" value="1"/>
</dbReference>
<proteinExistence type="inferred from homology"/>
<accession>C1CN23</accession>
<organism>
    <name type="scientific">Streptococcus pneumoniae (strain P1031)</name>
    <dbReference type="NCBI Taxonomy" id="488223"/>
    <lineage>
        <taxon>Bacteria</taxon>
        <taxon>Bacillati</taxon>
        <taxon>Bacillota</taxon>
        <taxon>Bacilli</taxon>
        <taxon>Lactobacillales</taxon>
        <taxon>Streptococcaceae</taxon>
        <taxon>Streptococcus</taxon>
    </lineage>
</organism>